<comment type="function">
    <text evidence="3">Catalytic component of the histone acetylase B (HAT-B) complex. Acetylates 'Lys-12' of histone H4 which is required for telomeric silencing. Has intrinsic substrate specificity that modifies lysine in recognition sequence GXGKXG. Involved in DNA double-strand break repair (By similarity).</text>
</comment>
<comment type="catalytic activity">
    <reaction evidence="3">
        <text>L-lysyl-[protein] + acetyl-CoA = N(6)-acetyl-L-lysyl-[protein] + CoA + H(+)</text>
        <dbReference type="Rhea" id="RHEA:45948"/>
        <dbReference type="Rhea" id="RHEA-COMP:9752"/>
        <dbReference type="Rhea" id="RHEA-COMP:10731"/>
        <dbReference type="ChEBI" id="CHEBI:15378"/>
        <dbReference type="ChEBI" id="CHEBI:29969"/>
        <dbReference type="ChEBI" id="CHEBI:57287"/>
        <dbReference type="ChEBI" id="CHEBI:57288"/>
        <dbReference type="ChEBI" id="CHEBI:61930"/>
        <dbReference type="EC" id="2.3.1.48"/>
    </reaction>
</comment>
<comment type="subunit">
    <text evidence="3">Component of the HAT-B complex composed of at least hat1 and hat2. The HAT-B complex binds to histone H4 tail.</text>
</comment>
<comment type="subcellular location">
    <subcellularLocation>
        <location evidence="1">Cytoplasm</location>
    </subcellularLocation>
    <subcellularLocation>
        <location evidence="1">Nucleus</location>
    </subcellularLocation>
</comment>
<comment type="similarity">
    <text evidence="5">Belongs to the HAT1 family.</text>
</comment>
<reference key="1">
    <citation type="journal article" date="2005" name="Nature">
        <title>Sequencing of Aspergillus nidulans and comparative analysis with A. fumigatus and A. oryzae.</title>
        <authorList>
            <person name="Galagan J.E."/>
            <person name="Calvo S.E."/>
            <person name="Cuomo C."/>
            <person name="Ma L.-J."/>
            <person name="Wortman J.R."/>
            <person name="Batzoglou S."/>
            <person name="Lee S.-I."/>
            <person name="Bastuerkmen M."/>
            <person name="Spevak C.C."/>
            <person name="Clutterbuck J."/>
            <person name="Kapitonov V."/>
            <person name="Jurka J."/>
            <person name="Scazzocchio C."/>
            <person name="Farman M.L."/>
            <person name="Butler J."/>
            <person name="Purcell S."/>
            <person name="Harris S."/>
            <person name="Braus G.H."/>
            <person name="Draht O."/>
            <person name="Busch S."/>
            <person name="D'Enfert C."/>
            <person name="Bouchier C."/>
            <person name="Goldman G.H."/>
            <person name="Bell-Pedersen D."/>
            <person name="Griffiths-Jones S."/>
            <person name="Doonan J.H."/>
            <person name="Yu J."/>
            <person name="Vienken K."/>
            <person name="Pain A."/>
            <person name="Freitag M."/>
            <person name="Selker E.U."/>
            <person name="Archer D.B."/>
            <person name="Penalva M.A."/>
            <person name="Oakley B.R."/>
            <person name="Momany M."/>
            <person name="Tanaka T."/>
            <person name="Kumagai T."/>
            <person name="Asai K."/>
            <person name="Machida M."/>
            <person name="Nierman W.C."/>
            <person name="Denning D.W."/>
            <person name="Caddick M.X."/>
            <person name="Hynes M."/>
            <person name="Paoletti M."/>
            <person name="Fischer R."/>
            <person name="Miller B.L."/>
            <person name="Dyer P.S."/>
            <person name="Sachs M.S."/>
            <person name="Osmani S.A."/>
            <person name="Birren B.W."/>
        </authorList>
    </citation>
    <scope>NUCLEOTIDE SEQUENCE [LARGE SCALE GENOMIC DNA]</scope>
    <source>
        <strain>FGSC A4 / ATCC 38163 / CBS 112.46 / NRRL 194 / M139</strain>
    </source>
</reference>
<reference key="2">
    <citation type="journal article" date="2009" name="Fungal Genet. Biol.">
        <title>The 2008 update of the Aspergillus nidulans genome annotation: a community effort.</title>
        <authorList>
            <person name="Wortman J.R."/>
            <person name="Gilsenan J.M."/>
            <person name="Joardar V."/>
            <person name="Deegan J."/>
            <person name="Clutterbuck J."/>
            <person name="Andersen M.R."/>
            <person name="Archer D."/>
            <person name="Bencina M."/>
            <person name="Braus G."/>
            <person name="Coutinho P."/>
            <person name="von Dohren H."/>
            <person name="Doonan J."/>
            <person name="Driessen A.J."/>
            <person name="Durek P."/>
            <person name="Espeso E."/>
            <person name="Fekete E."/>
            <person name="Flipphi M."/>
            <person name="Estrada C.G."/>
            <person name="Geysens S."/>
            <person name="Goldman G."/>
            <person name="de Groot P.W."/>
            <person name="Hansen K."/>
            <person name="Harris S.D."/>
            <person name="Heinekamp T."/>
            <person name="Helmstaedt K."/>
            <person name="Henrissat B."/>
            <person name="Hofmann G."/>
            <person name="Homan T."/>
            <person name="Horio T."/>
            <person name="Horiuchi H."/>
            <person name="James S."/>
            <person name="Jones M."/>
            <person name="Karaffa L."/>
            <person name="Karanyi Z."/>
            <person name="Kato M."/>
            <person name="Keller N."/>
            <person name="Kelly D.E."/>
            <person name="Kiel J.A."/>
            <person name="Kim J.M."/>
            <person name="van der Klei I.J."/>
            <person name="Klis F.M."/>
            <person name="Kovalchuk A."/>
            <person name="Krasevec N."/>
            <person name="Kubicek C.P."/>
            <person name="Liu B."/>
            <person name="Maccabe A."/>
            <person name="Meyer V."/>
            <person name="Mirabito P."/>
            <person name="Miskei M."/>
            <person name="Mos M."/>
            <person name="Mullins J."/>
            <person name="Nelson D.R."/>
            <person name="Nielsen J."/>
            <person name="Oakley B.R."/>
            <person name="Osmani S.A."/>
            <person name="Pakula T."/>
            <person name="Paszewski A."/>
            <person name="Paulsen I."/>
            <person name="Pilsyk S."/>
            <person name="Pocsi I."/>
            <person name="Punt P.J."/>
            <person name="Ram A.F."/>
            <person name="Ren Q."/>
            <person name="Robellet X."/>
            <person name="Robson G."/>
            <person name="Seiboth B."/>
            <person name="van Solingen P."/>
            <person name="Specht T."/>
            <person name="Sun J."/>
            <person name="Taheri-Talesh N."/>
            <person name="Takeshita N."/>
            <person name="Ussery D."/>
            <person name="vanKuyk P.A."/>
            <person name="Visser H."/>
            <person name="van de Vondervoort P.J."/>
            <person name="de Vries R.P."/>
            <person name="Walton J."/>
            <person name="Xiang X."/>
            <person name="Xiong Y."/>
            <person name="Zeng A.P."/>
            <person name="Brandt B.W."/>
            <person name="Cornell M.J."/>
            <person name="van den Hondel C.A."/>
            <person name="Visser J."/>
            <person name="Oliver S.G."/>
            <person name="Turner G."/>
        </authorList>
    </citation>
    <scope>GENOME REANNOTATION</scope>
    <source>
        <strain>FGSC A4 / ATCC 38163 / CBS 112.46 / NRRL 194 / M139</strain>
    </source>
</reference>
<evidence type="ECO:0000250" key="1"/>
<evidence type="ECO:0000250" key="2">
    <source>
        <dbReference type="UniProtKB" id="O14929"/>
    </source>
</evidence>
<evidence type="ECO:0000250" key="3">
    <source>
        <dbReference type="UniProtKB" id="Q12341"/>
    </source>
</evidence>
<evidence type="ECO:0000256" key="4">
    <source>
        <dbReference type="SAM" id="MobiDB-lite"/>
    </source>
</evidence>
<evidence type="ECO:0000305" key="5"/>
<gene>
    <name type="primary">hat1</name>
    <name type="ORF">AN6214</name>
</gene>
<proteinExistence type="inferred from homology"/>
<protein>
    <recommendedName>
        <fullName>Histone acetyltransferase type B catalytic subunit</fullName>
        <ecNumber evidence="3">2.3.1.48</ecNumber>
    </recommendedName>
</protein>
<name>HAT1_EMENI</name>
<accession>Q5AZR6</accession>
<accession>C8V1T7</accession>
<feature type="chain" id="PRO_0000227722" description="Histone acetyltransferase type B catalytic subunit">
    <location>
        <begin position="1"/>
        <end position="496"/>
    </location>
</feature>
<feature type="region of interest" description="Interaction with histone H4 N-terminus" evidence="3">
    <location>
        <begin position="44"/>
        <end position="46"/>
    </location>
</feature>
<feature type="region of interest" description="Interaction with histone H4 N-terminus" evidence="3">
    <location>
        <begin position="214"/>
        <end position="216"/>
    </location>
</feature>
<feature type="region of interest" description="Disordered" evidence="4">
    <location>
        <begin position="456"/>
        <end position="496"/>
    </location>
</feature>
<feature type="active site" description="Proton donor/acceptor" evidence="3">
    <location>
        <position position="289"/>
    </location>
</feature>
<feature type="binding site" evidence="3">
    <location>
        <begin position="254"/>
        <end position="256"/>
    </location>
    <ligand>
        <name>acetyl-CoA</name>
        <dbReference type="ChEBI" id="CHEBI:57288"/>
    </ligand>
</feature>
<feature type="binding site" evidence="3">
    <location>
        <begin position="261"/>
        <end position="267"/>
    </location>
    <ligand>
        <name>acetyl-CoA</name>
        <dbReference type="ChEBI" id="CHEBI:57288"/>
    </ligand>
</feature>
<feature type="site" description="Interaction with histone H4 N-terminus" evidence="2">
    <location>
        <position position="181"/>
    </location>
</feature>
<sequence length="496" mass="57779">MSAEGEWSCDANDAVQITIVHPDQQKPKTLSSFHPQFTYPIFGEEERIFGYKGLIIRLRFAAHNLRPHVHVSYDEKFTAVDDAEPVDIIGALKEFLPEEAFSSLPEFESAVQEEDAKEFVPPGKLSHSYSIRGRNYEIWAASLADPQVQLLLNRFQIMVSFYIEAGTPLSTDDPEWTLDRWTVYFVLTAARYEKVEPPTPTASSYSIVGYATTYRWWFYKRDRSENPMPRDGPFPPPELVRPGELPSRLRIAQFLILPPHQGTGHGVNLYNTIHKTCLDDPTIMELTVEDPNESFDVLRDSADYHILRPEFLKHNIQINPDPWSDFSKKTKRVPTSSLLPLKTLNEIRTAYKIEPTQFAHIQEMFLLGQIPLKNRRKGGANMARLLVKKYRDDDPNNRRYYWWRMLTKQRLYKRSRDVLIQLKMSERHKALEDTVTNVEDGYEQLFGFFNEREERLRAQQEEAETSNNRDQRTKRKFTVEDEDDEDESAAAKRPKA</sequence>
<dbReference type="EC" id="2.3.1.48" evidence="3"/>
<dbReference type="EMBL" id="AACD01000105">
    <property type="protein sequence ID" value="EAA58000.1"/>
    <property type="molecule type" value="Genomic_DNA"/>
</dbReference>
<dbReference type="EMBL" id="BN001301">
    <property type="protein sequence ID" value="CBF69944.1"/>
    <property type="molecule type" value="Genomic_DNA"/>
</dbReference>
<dbReference type="RefSeq" id="XP_663818.1">
    <property type="nucleotide sequence ID" value="XM_658726.1"/>
</dbReference>
<dbReference type="SMR" id="Q5AZR6"/>
<dbReference type="FunCoup" id="Q5AZR6">
    <property type="interactions" value="1118"/>
</dbReference>
<dbReference type="STRING" id="227321.Q5AZR6"/>
<dbReference type="EnsemblFungi" id="CBF69944">
    <property type="protein sequence ID" value="CBF69944"/>
    <property type="gene ID" value="ANIA_06214"/>
</dbReference>
<dbReference type="KEGG" id="ani:ANIA_06214"/>
<dbReference type="eggNOG" id="KOG2696">
    <property type="taxonomic scope" value="Eukaryota"/>
</dbReference>
<dbReference type="HOGENOM" id="CLU_036024_2_1_1"/>
<dbReference type="InParanoid" id="Q5AZR6"/>
<dbReference type="OMA" id="WTCDAND"/>
<dbReference type="OrthoDB" id="10253098at2759"/>
<dbReference type="Proteomes" id="UP000000560">
    <property type="component" value="Chromosome I"/>
</dbReference>
<dbReference type="GO" id="GO:0000781">
    <property type="term" value="C:chromosome, telomeric region"/>
    <property type="evidence" value="ECO:0007669"/>
    <property type="project" value="GOC"/>
</dbReference>
<dbReference type="GO" id="GO:0005737">
    <property type="term" value="C:cytoplasm"/>
    <property type="evidence" value="ECO:0007669"/>
    <property type="project" value="UniProtKB-SubCell"/>
</dbReference>
<dbReference type="GO" id="GO:0005634">
    <property type="term" value="C:nucleus"/>
    <property type="evidence" value="ECO:0007669"/>
    <property type="project" value="UniProtKB-SubCell"/>
</dbReference>
<dbReference type="GO" id="GO:0010485">
    <property type="term" value="F:histone H4 acetyltransferase activity"/>
    <property type="evidence" value="ECO:0000318"/>
    <property type="project" value="GO_Central"/>
</dbReference>
<dbReference type="GO" id="GO:0006281">
    <property type="term" value="P:DNA repair"/>
    <property type="evidence" value="ECO:0007669"/>
    <property type="project" value="UniProtKB-KW"/>
</dbReference>
<dbReference type="GO" id="GO:0031509">
    <property type="term" value="P:subtelomeric heterochromatin formation"/>
    <property type="evidence" value="ECO:0007669"/>
    <property type="project" value="InterPro"/>
</dbReference>
<dbReference type="FunFam" id="3.40.630.30:FF:000125">
    <property type="entry name" value="Histone acetyltransferase type B catalytic subunit"/>
    <property type="match status" value="1"/>
</dbReference>
<dbReference type="Gene3D" id="3.40.630.30">
    <property type="match status" value="1"/>
</dbReference>
<dbReference type="Gene3D" id="3.90.360.10">
    <property type="entry name" value="Histone acetyl transferase 1 (HAT1), N-terminal domain"/>
    <property type="match status" value="1"/>
</dbReference>
<dbReference type="InterPro" id="IPR016181">
    <property type="entry name" value="Acyl_CoA_acyltransferase"/>
</dbReference>
<dbReference type="InterPro" id="IPR019467">
    <property type="entry name" value="Hat1_N"/>
</dbReference>
<dbReference type="InterPro" id="IPR037113">
    <property type="entry name" value="Hat1_N_sf"/>
</dbReference>
<dbReference type="InterPro" id="IPR017380">
    <property type="entry name" value="Hist_AcTrfase_B-typ_cat-su"/>
</dbReference>
<dbReference type="PANTHER" id="PTHR12046">
    <property type="entry name" value="HISTONE ACETYLTRANSFERASE TYPE B CATALYTIC SUBUNIT"/>
    <property type="match status" value="1"/>
</dbReference>
<dbReference type="Pfam" id="PF10394">
    <property type="entry name" value="Hat1_N"/>
    <property type="match status" value="1"/>
</dbReference>
<dbReference type="PIRSF" id="PIRSF038084">
    <property type="entry name" value="HAT-B_cat"/>
    <property type="match status" value="1"/>
</dbReference>
<dbReference type="SUPFAM" id="SSF55729">
    <property type="entry name" value="Acyl-CoA N-acyltransferases (Nat)"/>
    <property type="match status" value="1"/>
</dbReference>
<keyword id="KW-0012">Acyltransferase</keyword>
<keyword id="KW-0156">Chromatin regulator</keyword>
<keyword id="KW-0963">Cytoplasm</keyword>
<keyword id="KW-0227">DNA damage</keyword>
<keyword id="KW-0234">DNA repair</keyword>
<keyword id="KW-0539">Nucleus</keyword>
<keyword id="KW-1185">Reference proteome</keyword>
<keyword id="KW-0808">Transferase</keyword>
<organism>
    <name type="scientific">Emericella nidulans (strain FGSC A4 / ATCC 38163 / CBS 112.46 / NRRL 194 / M139)</name>
    <name type="common">Aspergillus nidulans</name>
    <dbReference type="NCBI Taxonomy" id="227321"/>
    <lineage>
        <taxon>Eukaryota</taxon>
        <taxon>Fungi</taxon>
        <taxon>Dikarya</taxon>
        <taxon>Ascomycota</taxon>
        <taxon>Pezizomycotina</taxon>
        <taxon>Eurotiomycetes</taxon>
        <taxon>Eurotiomycetidae</taxon>
        <taxon>Eurotiales</taxon>
        <taxon>Aspergillaceae</taxon>
        <taxon>Aspergillus</taxon>
        <taxon>Aspergillus subgen. Nidulantes</taxon>
    </lineage>
</organism>